<gene>
    <name type="primary">HSV2</name>
    <name type="ordered locus">CAGL0B02101g</name>
</gene>
<name>HSV2_CANGA</name>
<dbReference type="EMBL" id="CR380948">
    <property type="protein sequence ID" value="CAG57961.1"/>
    <property type="molecule type" value="Genomic_DNA"/>
</dbReference>
<dbReference type="RefSeq" id="XP_445061.1">
    <property type="nucleotide sequence ID" value="XM_445061.1"/>
</dbReference>
<dbReference type="SMR" id="Q6FXC1"/>
<dbReference type="FunCoup" id="Q6FXC1">
    <property type="interactions" value="409"/>
</dbReference>
<dbReference type="STRING" id="284593.Q6FXC1"/>
<dbReference type="EnsemblFungi" id="CAGL0B02101g-T">
    <property type="protein sequence ID" value="CAGL0B02101g-T-p1"/>
    <property type="gene ID" value="CAGL0B02101g"/>
</dbReference>
<dbReference type="KEGG" id="cgr:2886497"/>
<dbReference type="CGD" id="CAL0127752">
    <property type="gene designation" value="CAGL0B02101g"/>
</dbReference>
<dbReference type="VEuPathDB" id="FungiDB:CAGL0B02101g"/>
<dbReference type="eggNOG" id="KOG2111">
    <property type="taxonomic scope" value="Eukaryota"/>
</dbReference>
<dbReference type="HOGENOM" id="CLU_025895_0_1_1"/>
<dbReference type="InParanoid" id="Q6FXC1"/>
<dbReference type="OMA" id="GGPQCMC"/>
<dbReference type="Proteomes" id="UP000002428">
    <property type="component" value="Chromosome B"/>
</dbReference>
<dbReference type="GO" id="GO:0030659">
    <property type="term" value="C:cytoplasmic vesicle membrane"/>
    <property type="evidence" value="ECO:0007669"/>
    <property type="project" value="UniProtKB-SubCell"/>
</dbReference>
<dbReference type="GO" id="GO:0005768">
    <property type="term" value="C:endosome"/>
    <property type="evidence" value="ECO:0007669"/>
    <property type="project" value="EnsemblFungi"/>
</dbReference>
<dbReference type="GO" id="GO:0000324">
    <property type="term" value="C:fungal-type vacuole"/>
    <property type="evidence" value="ECO:0007669"/>
    <property type="project" value="EnsemblFungi"/>
</dbReference>
<dbReference type="GO" id="GO:0005774">
    <property type="term" value="C:vacuolar membrane"/>
    <property type="evidence" value="ECO:0007669"/>
    <property type="project" value="UniProtKB-SubCell"/>
</dbReference>
<dbReference type="GO" id="GO:0080025">
    <property type="term" value="F:phosphatidylinositol-3,5-bisphosphate binding"/>
    <property type="evidence" value="ECO:0007669"/>
    <property type="project" value="EnsemblFungi"/>
</dbReference>
<dbReference type="GO" id="GO:0032266">
    <property type="term" value="F:phosphatidylinositol-3-phosphate binding"/>
    <property type="evidence" value="ECO:0007669"/>
    <property type="project" value="EnsemblFungi"/>
</dbReference>
<dbReference type="GO" id="GO:0070273">
    <property type="term" value="F:phosphatidylinositol-4-phosphate binding"/>
    <property type="evidence" value="ECO:0007669"/>
    <property type="project" value="EnsemblFungi"/>
</dbReference>
<dbReference type="GO" id="GO:0010314">
    <property type="term" value="F:phosphatidylinositol-5-phosphate binding"/>
    <property type="evidence" value="ECO:0007669"/>
    <property type="project" value="EnsemblFungi"/>
</dbReference>
<dbReference type="GO" id="GO:0034727">
    <property type="term" value="P:piecemeal microautophagy of the nucleus"/>
    <property type="evidence" value="ECO:0007669"/>
    <property type="project" value="EnsemblFungi"/>
</dbReference>
<dbReference type="GO" id="GO:0015031">
    <property type="term" value="P:protein transport"/>
    <property type="evidence" value="ECO:0007669"/>
    <property type="project" value="UniProtKB-KW"/>
</dbReference>
<dbReference type="Gene3D" id="2.130.10.10">
    <property type="entry name" value="YVTN repeat-like/Quinoprotein amine dehydrogenase"/>
    <property type="match status" value="1"/>
</dbReference>
<dbReference type="InterPro" id="IPR048720">
    <property type="entry name" value="PROPPIN"/>
</dbReference>
<dbReference type="InterPro" id="IPR015943">
    <property type="entry name" value="WD40/YVTN_repeat-like_dom_sf"/>
</dbReference>
<dbReference type="InterPro" id="IPR036322">
    <property type="entry name" value="WD40_repeat_dom_sf"/>
</dbReference>
<dbReference type="InterPro" id="IPR001680">
    <property type="entry name" value="WD40_rpt"/>
</dbReference>
<dbReference type="PANTHER" id="PTHR11227">
    <property type="entry name" value="WD-REPEAT PROTEIN INTERACTING WITH PHOSPHOINOSIDES WIPI -RELATED"/>
    <property type="match status" value="1"/>
</dbReference>
<dbReference type="Pfam" id="PF21032">
    <property type="entry name" value="PROPPIN"/>
    <property type="match status" value="1"/>
</dbReference>
<dbReference type="SMART" id="SM00320">
    <property type="entry name" value="WD40"/>
    <property type="match status" value="2"/>
</dbReference>
<dbReference type="SUPFAM" id="SSF50978">
    <property type="entry name" value="WD40 repeat-like"/>
    <property type="match status" value="1"/>
</dbReference>
<organism>
    <name type="scientific">Candida glabrata (strain ATCC 2001 / BCRC 20586 / JCM 3761 / NBRC 0622 / NRRL Y-65 / CBS 138)</name>
    <name type="common">Yeast</name>
    <name type="synonym">Nakaseomyces glabratus</name>
    <dbReference type="NCBI Taxonomy" id="284593"/>
    <lineage>
        <taxon>Eukaryota</taxon>
        <taxon>Fungi</taxon>
        <taxon>Dikarya</taxon>
        <taxon>Ascomycota</taxon>
        <taxon>Saccharomycotina</taxon>
        <taxon>Saccharomycetes</taxon>
        <taxon>Saccharomycetales</taxon>
        <taxon>Saccharomycetaceae</taxon>
        <taxon>Nakaseomyces</taxon>
    </lineage>
</organism>
<accession>Q6FXC1</accession>
<proteinExistence type="inferred from homology"/>
<feature type="chain" id="PRO_0000051026" description="SVP1-like protein 2">
    <location>
        <begin position="1"/>
        <end position="445"/>
    </location>
</feature>
<feature type="repeat" description="WD 1">
    <location>
        <begin position="218"/>
        <end position="258"/>
    </location>
</feature>
<feature type="repeat" description="WD 2">
    <location>
        <begin position="263"/>
        <end position="302"/>
    </location>
</feature>
<feature type="region of interest" description="Disordered" evidence="2">
    <location>
        <begin position="301"/>
        <end position="321"/>
    </location>
</feature>
<feature type="compositionally biased region" description="Polar residues" evidence="2">
    <location>
        <begin position="312"/>
        <end position="321"/>
    </location>
</feature>
<protein>
    <recommendedName>
        <fullName>SVP1-like protein 2</fullName>
    </recommendedName>
</protein>
<evidence type="ECO:0000250" key="1"/>
<evidence type="ECO:0000256" key="2">
    <source>
        <dbReference type="SAM" id="MobiDB-lite"/>
    </source>
</evidence>
<evidence type="ECO:0000305" key="3"/>
<reference key="1">
    <citation type="journal article" date="2004" name="Nature">
        <title>Genome evolution in yeasts.</title>
        <authorList>
            <person name="Dujon B."/>
            <person name="Sherman D."/>
            <person name="Fischer G."/>
            <person name="Durrens P."/>
            <person name="Casaregola S."/>
            <person name="Lafontaine I."/>
            <person name="de Montigny J."/>
            <person name="Marck C."/>
            <person name="Neuveglise C."/>
            <person name="Talla E."/>
            <person name="Goffard N."/>
            <person name="Frangeul L."/>
            <person name="Aigle M."/>
            <person name="Anthouard V."/>
            <person name="Babour A."/>
            <person name="Barbe V."/>
            <person name="Barnay S."/>
            <person name="Blanchin S."/>
            <person name="Beckerich J.-M."/>
            <person name="Beyne E."/>
            <person name="Bleykasten C."/>
            <person name="Boisrame A."/>
            <person name="Boyer J."/>
            <person name="Cattolico L."/>
            <person name="Confanioleri F."/>
            <person name="de Daruvar A."/>
            <person name="Despons L."/>
            <person name="Fabre E."/>
            <person name="Fairhead C."/>
            <person name="Ferry-Dumazet H."/>
            <person name="Groppi A."/>
            <person name="Hantraye F."/>
            <person name="Hennequin C."/>
            <person name="Jauniaux N."/>
            <person name="Joyet P."/>
            <person name="Kachouri R."/>
            <person name="Kerrest A."/>
            <person name="Koszul R."/>
            <person name="Lemaire M."/>
            <person name="Lesur I."/>
            <person name="Ma L."/>
            <person name="Muller H."/>
            <person name="Nicaud J.-M."/>
            <person name="Nikolski M."/>
            <person name="Oztas S."/>
            <person name="Ozier-Kalogeropoulos O."/>
            <person name="Pellenz S."/>
            <person name="Potier S."/>
            <person name="Richard G.-F."/>
            <person name="Straub M.-L."/>
            <person name="Suleau A."/>
            <person name="Swennen D."/>
            <person name="Tekaia F."/>
            <person name="Wesolowski-Louvel M."/>
            <person name="Westhof E."/>
            <person name="Wirth B."/>
            <person name="Zeniou-Meyer M."/>
            <person name="Zivanovic Y."/>
            <person name="Bolotin-Fukuhara M."/>
            <person name="Thierry A."/>
            <person name="Bouchier C."/>
            <person name="Caudron B."/>
            <person name="Scarpelli C."/>
            <person name="Gaillardin C."/>
            <person name="Weissenbach J."/>
            <person name="Wincker P."/>
            <person name="Souciet J.-L."/>
        </authorList>
    </citation>
    <scope>NUCLEOTIDE SEQUENCE [LARGE SCALE GENOMIC DNA]</scope>
    <source>
        <strain>ATCC 2001 / BCRC 20586 / JCM 3761 / NBRC 0622 / NRRL Y-65 / CBS 138</strain>
    </source>
</reference>
<keyword id="KW-0968">Cytoplasmic vesicle</keyword>
<keyword id="KW-0472">Membrane</keyword>
<keyword id="KW-0653">Protein transport</keyword>
<keyword id="KW-1185">Reference proteome</keyword>
<keyword id="KW-0677">Repeat</keyword>
<keyword id="KW-0813">Transport</keyword>
<keyword id="KW-0926">Vacuole</keyword>
<keyword id="KW-0853">WD repeat</keyword>
<sequence length="445" mass="50429">MDVREAIQQEAGAETGFASVTFNQDESCFSCANEQGFLVYNTFPLSLKLTKEFKQTPERGAGIGYSQMLYRTNYIALVGGGQRPRYSLNRVVIWDDLQQKESFSLKFMSIVRKVVLSRVHLVVALENELFIYSFHSTPKLLCPPIKTAPFGPFDFKVVTIEGKATDQAKVTSLLAYPSAKLTGQLHVADLSKLRSNQNNNQDMALTSESFLPTTIIKAHKAPIRNVRINNQGTMVATASRKGTLIRIFSTHNGILLKEFRRGLDRAEIYDMCFSPLGTRLAVVSDKQTLHVFQIAPMAEGTLNPANPEDHQSSGSNGHIKANTNQVHSLRNIVPTSWKPKYLDSVWSMCKVHLRNPKLRNNVNDLAFNEDRCTIAWCRQNRSHTFKNGNHFNENEENKLVLVWKNSRIWEKYVILEKEAPNSNDGIKGPSPLTEWELVRESWREL</sequence>
<comment type="function">
    <text evidence="1">Involved in mitochondrial or peroxisomal functions and amino acid signaling pathways.</text>
</comment>
<comment type="subcellular location">
    <subcellularLocation>
        <location evidence="1">Vacuole membrane</location>
        <topology evidence="1">Peripheral membrane protein</topology>
    </subcellularLocation>
    <subcellularLocation>
        <location evidence="1">Cytoplasmic vesicle membrane</location>
        <topology evidence="1">Peripheral membrane protein</topology>
    </subcellularLocation>
    <text evidence="1">Vesicular and vacuolar.</text>
</comment>
<comment type="domain">
    <text evidence="1">May contain a beta-propeller domain involved in specific binding to phosphatidylinositol 3,5-bisphosphate (PIP2), leading to the association of the protein to the membrane.</text>
</comment>
<comment type="similarity">
    <text evidence="3">Belongs to the WD repeat PROPPIN family.</text>
</comment>